<evidence type="ECO:0000255" key="1">
    <source>
        <dbReference type="HAMAP-Rule" id="MF_00180"/>
    </source>
</evidence>
<proteinExistence type="inferred from homology"/>
<feature type="chain" id="PRO_1000098281" description="3,4-dihydroxy-2-butanone 4-phosphate synthase">
    <location>
        <begin position="1"/>
        <end position="217"/>
    </location>
</feature>
<feature type="binding site" evidence="1">
    <location>
        <begin position="37"/>
        <end position="38"/>
    </location>
    <ligand>
        <name>D-ribulose 5-phosphate</name>
        <dbReference type="ChEBI" id="CHEBI:58121"/>
    </ligand>
</feature>
<feature type="binding site" evidence="1">
    <location>
        <position position="38"/>
    </location>
    <ligand>
        <name>Mg(2+)</name>
        <dbReference type="ChEBI" id="CHEBI:18420"/>
        <label>1</label>
    </ligand>
</feature>
<feature type="binding site" evidence="1">
    <location>
        <position position="38"/>
    </location>
    <ligand>
        <name>Mg(2+)</name>
        <dbReference type="ChEBI" id="CHEBI:18420"/>
        <label>2</label>
    </ligand>
</feature>
<feature type="binding site" evidence="1">
    <location>
        <position position="42"/>
    </location>
    <ligand>
        <name>D-ribulose 5-phosphate</name>
        <dbReference type="ChEBI" id="CHEBI:58121"/>
    </ligand>
</feature>
<feature type="binding site" evidence="1">
    <location>
        <begin position="150"/>
        <end position="154"/>
    </location>
    <ligand>
        <name>D-ribulose 5-phosphate</name>
        <dbReference type="ChEBI" id="CHEBI:58121"/>
    </ligand>
</feature>
<feature type="binding site" evidence="1">
    <location>
        <position position="153"/>
    </location>
    <ligand>
        <name>Mg(2+)</name>
        <dbReference type="ChEBI" id="CHEBI:18420"/>
        <label>2</label>
    </ligand>
</feature>
<feature type="binding site" evidence="1">
    <location>
        <position position="174"/>
    </location>
    <ligand>
        <name>D-ribulose 5-phosphate</name>
        <dbReference type="ChEBI" id="CHEBI:58121"/>
    </ligand>
</feature>
<feature type="site" description="Essential for catalytic activity" evidence="1">
    <location>
        <position position="136"/>
    </location>
</feature>
<feature type="site" description="Essential for catalytic activity" evidence="1">
    <location>
        <position position="174"/>
    </location>
</feature>
<dbReference type="EC" id="4.1.99.12" evidence="1"/>
<dbReference type="EMBL" id="CP000964">
    <property type="protein sequence ID" value="ACI07195.1"/>
    <property type="molecule type" value="Genomic_DNA"/>
</dbReference>
<dbReference type="SMR" id="B5XU43"/>
<dbReference type="KEGG" id="kpe:KPK_0668"/>
<dbReference type="HOGENOM" id="CLU_020273_3_0_6"/>
<dbReference type="UniPathway" id="UPA00275">
    <property type="reaction ID" value="UER00399"/>
</dbReference>
<dbReference type="Proteomes" id="UP000001734">
    <property type="component" value="Chromosome"/>
</dbReference>
<dbReference type="GO" id="GO:0005829">
    <property type="term" value="C:cytosol"/>
    <property type="evidence" value="ECO:0007669"/>
    <property type="project" value="TreeGrafter"/>
</dbReference>
<dbReference type="GO" id="GO:0008686">
    <property type="term" value="F:3,4-dihydroxy-2-butanone-4-phosphate synthase activity"/>
    <property type="evidence" value="ECO:0007669"/>
    <property type="project" value="UniProtKB-UniRule"/>
</dbReference>
<dbReference type="GO" id="GO:0000287">
    <property type="term" value="F:magnesium ion binding"/>
    <property type="evidence" value="ECO:0007669"/>
    <property type="project" value="UniProtKB-UniRule"/>
</dbReference>
<dbReference type="GO" id="GO:0030145">
    <property type="term" value="F:manganese ion binding"/>
    <property type="evidence" value="ECO:0007669"/>
    <property type="project" value="UniProtKB-UniRule"/>
</dbReference>
<dbReference type="GO" id="GO:0009231">
    <property type="term" value="P:riboflavin biosynthetic process"/>
    <property type="evidence" value="ECO:0007669"/>
    <property type="project" value="UniProtKB-UniRule"/>
</dbReference>
<dbReference type="FunFam" id="3.90.870.10:FF:000002">
    <property type="entry name" value="3,4-dihydroxy-2-butanone 4-phosphate synthase"/>
    <property type="match status" value="1"/>
</dbReference>
<dbReference type="Gene3D" id="3.90.870.10">
    <property type="entry name" value="DHBP synthase"/>
    <property type="match status" value="1"/>
</dbReference>
<dbReference type="HAMAP" id="MF_00180">
    <property type="entry name" value="RibB"/>
    <property type="match status" value="1"/>
</dbReference>
<dbReference type="InterPro" id="IPR017945">
    <property type="entry name" value="DHBP_synth_RibB-like_a/b_dom"/>
</dbReference>
<dbReference type="InterPro" id="IPR000422">
    <property type="entry name" value="DHBP_synthase_RibB"/>
</dbReference>
<dbReference type="NCBIfam" id="TIGR00506">
    <property type="entry name" value="ribB"/>
    <property type="match status" value="1"/>
</dbReference>
<dbReference type="PANTHER" id="PTHR21327:SF38">
    <property type="entry name" value="3,4-DIHYDROXY-2-BUTANONE 4-PHOSPHATE SYNTHASE"/>
    <property type="match status" value="1"/>
</dbReference>
<dbReference type="PANTHER" id="PTHR21327">
    <property type="entry name" value="GTP CYCLOHYDROLASE II-RELATED"/>
    <property type="match status" value="1"/>
</dbReference>
<dbReference type="Pfam" id="PF00926">
    <property type="entry name" value="DHBP_synthase"/>
    <property type="match status" value="1"/>
</dbReference>
<dbReference type="SUPFAM" id="SSF55821">
    <property type="entry name" value="YrdC/RibB"/>
    <property type="match status" value="1"/>
</dbReference>
<keyword id="KW-0456">Lyase</keyword>
<keyword id="KW-0460">Magnesium</keyword>
<keyword id="KW-0464">Manganese</keyword>
<keyword id="KW-0479">Metal-binding</keyword>
<keyword id="KW-0686">Riboflavin biosynthesis</keyword>
<name>RIBB_KLEP3</name>
<sequence>MNQTLLSSFGTAFERVEHALDALREGRGVMVLDDEDRENEGDMIFAAETMTVEQMALTIRHGSGIVCLCLTEDRRKQLDLPMMVENNTSAYGTGFTVTIEAAEGVTTGVSAADRVTTVRAAIADGAKPSDLNRPGHVFPLRAQPGGVLTRGGHTEATIDLVTLAGFKPAGVLCELTNDDGTMARAPECIKFAQQHNMAIVTIEDLVAYRREHERKAS</sequence>
<protein>
    <recommendedName>
        <fullName evidence="1">3,4-dihydroxy-2-butanone 4-phosphate synthase</fullName>
        <shortName evidence="1">DHBP synthase</shortName>
        <ecNumber evidence="1">4.1.99.12</ecNumber>
    </recommendedName>
</protein>
<gene>
    <name evidence="1" type="primary">ribB</name>
    <name type="ordered locus">KPK_0668</name>
</gene>
<accession>B5XU43</accession>
<organism>
    <name type="scientific">Klebsiella pneumoniae (strain 342)</name>
    <dbReference type="NCBI Taxonomy" id="507522"/>
    <lineage>
        <taxon>Bacteria</taxon>
        <taxon>Pseudomonadati</taxon>
        <taxon>Pseudomonadota</taxon>
        <taxon>Gammaproteobacteria</taxon>
        <taxon>Enterobacterales</taxon>
        <taxon>Enterobacteriaceae</taxon>
        <taxon>Klebsiella/Raoultella group</taxon>
        <taxon>Klebsiella</taxon>
        <taxon>Klebsiella pneumoniae complex</taxon>
    </lineage>
</organism>
<comment type="function">
    <text evidence="1">Catalyzes the conversion of D-ribulose 5-phosphate to formate and 3,4-dihydroxy-2-butanone 4-phosphate.</text>
</comment>
<comment type="catalytic activity">
    <reaction evidence="1">
        <text>D-ribulose 5-phosphate = (2S)-2-hydroxy-3-oxobutyl phosphate + formate + H(+)</text>
        <dbReference type="Rhea" id="RHEA:18457"/>
        <dbReference type="ChEBI" id="CHEBI:15378"/>
        <dbReference type="ChEBI" id="CHEBI:15740"/>
        <dbReference type="ChEBI" id="CHEBI:58121"/>
        <dbReference type="ChEBI" id="CHEBI:58830"/>
        <dbReference type="EC" id="4.1.99.12"/>
    </reaction>
</comment>
<comment type="cofactor">
    <cofactor evidence="1">
        <name>Mg(2+)</name>
        <dbReference type="ChEBI" id="CHEBI:18420"/>
    </cofactor>
    <cofactor evidence="1">
        <name>Mn(2+)</name>
        <dbReference type="ChEBI" id="CHEBI:29035"/>
    </cofactor>
    <text evidence="1">Binds 2 divalent metal cations per subunit. Magnesium or manganese.</text>
</comment>
<comment type="pathway">
    <text evidence="1">Cofactor biosynthesis; riboflavin biosynthesis; 2-hydroxy-3-oxobutyl phosphate from D-ribulose 5-phosphate: step 1/1.</text>
</comment>
<comment type="subunit">
    <text evidence="1">Homodimer.</text>
</comment>
<comment type="similarity">
    <text evidence="1">Belongs to the DHBP synthase family.</text>
</comment>
<reference key="1">
    <citation type="journal article" date="2008" name="PLoS Genet.">
        <title>Complete genome sequence of the N2-fixing broad host range endophyte Klebsiella pneumoniae 342 and virulence predictions verified in mice.</title>
        <authorList>
            <person name="Fouts D.E."/>
            <person name="Tyler H.L."/>
            <person name="DeBoy R.T."/>
            <person name="Daugherty S."/>
            <person name="Ren Q."/>
            <person name="Badger J.H."/>
            <person name="Durkin A.S."/>
            <person name="Huot H."/>
            <person name="Shrivastava S."/>
            <person name="Kothari S."/>
            <person name="Dodson R.J."/>
            <person name="Mohamoud Y."/>
            <person name="Khouri H."/>
            <person name="Roesch L.F.W."/>
            <person name="Krogfelt K.A."/>
            <person name="Struve C."/>
            <person name="Triplett E.W."/>
            <person name="Methe B.A."/>
        </authorList>
    </citation>
    <scope>NUCLEOTIDE SEQUENCE [LARGE SCALE GENOMIC DNA]</scope>
    <source>
        <strain>342</strain>
    </source>
</reference>